<feature type="chain" id="PRO_0000336878" description="UDP-N-acetylmuramate--L-alanine ligase">
    <location>
        <begin position="1"/>
        <end position="491"/>
    </location>
</feature>
<feature type="binding site" evidence="1">
    <location>
        <begin position="126"/>
        <end position="132"/>
    </location>
    <ligand>
        <name>ATP</name>
        <dbReference type="ChEBI" id="CHEBI:30616"/>
    </ligand>
</feature>
<reference key="1">
    <citation type="journal article" date="2006" name="J. Bacteriol.">
        <title>Complete genome sequence of Yersinia pestis strains Antiqua and Nepal516: evidence of gene reduction in an emerging pathogen.</title>
        <authorList>
            <person name="Chain P.S.G."/>
            <person name="Hu P."/>
            <person name="Malfatti S.A."/>
            <person name="Radnedge L."/>
            <person name="Larimer F."/>
            <person name="Vergez L.M."/>
            <person name="Worsham P."/>
            <person name="Chu M.C."/>
            <person name="Andersen G.L."/>
        </authorList>
    </citation>
    <scope>NUCLEOTIDE SEQUENCE [LARGE SCALE GENOMIC DNA]</scope>
    <source>
        <strain>Nepal516</strain>
    </source>
</reference>
<reference key="2">
    <citation type="submission" date="2009-04" db="EMBL/GenBank/DDBJ databases">
        <title>Yersinia pestis Nepal516A whole genome shotgun sequencing project.</title>
        <authorList>
            <person name="Plunkett G. III"/>
            <person name="Anderson B.D."/>
            <person name="Baumler D.J."/>
            <person name="Burland V."/>
            <person name="Cabot E.L."/>
            <person name="Glasner J.D."/>
            <person name="Mau B."/>
            <person name="Neeno-Eckwall E."/>
            <person name="Perna N.T."/>
            <person name="Munk A.C."/>
            <person name="Tapia R."/>
            <person name="Green L.D."/>
            <person name="Rogers Y.C."/>
            <person name="Detter J.C."/>
            <person name="Bruce D.C."/>
            <person name="Brettin T.S."/>
        </authorList>
    </citation>
    <scope>NUCLEOTIDE SEQUENCE [LARGE SCALE GENOMIC DNA]</scope>
    <source>
        <strain>Nepal516</strain>
    </source>
</reference>
<dbReference type="EC" id="6.3.2.8" evidence="1"/>
<dbReference type="EMBL" id="CP000305">
    <property type="protein sequence ID" value="ABG16754.1"/>
    <property type="status" value="ALT_INIT"/>
    <property type="molecule type" value="Genomic_DNA"/>
</dbReference>
<dbReference type="EMBL" id="ACNQ01000006">
    <property type="protein sequence ID" value="EEO78210.1"/>
    <property type="molecule type" value="Genomic_DNA"/>
</dbReference>
<dbReference type="RefSeq" id="WP_002216457.1">
    <property type="nucleotide sequence ID" value="NZ_ACNQ01000006.1"/>
</dbReference>
<dbReference type="SMR" id="Q1CMM6"/>
<dbReference type="GeneID" id="57974059"/>
<dbReference type="KEGG" id="ypn:YPN_0422"/>
<dbReference type="HOGENOM" id="CLU_028104_2_2_6"/>
<dbReference type="UniPathway" id="UPA00219"/>
<dbReference type="Proteomes" id="UP000008936">
    <property type="component" value="Chromosome"/>
</dbReference>
<dbReference type="GO" id="GO:0005737">
    <property type="term" value="C:cytoplasm"/>
    <property type="evidence" value="ECO:0007669"/>
    <property type="project" value="UniProtKB-SubCell"/>
</dbReference>
<dbReference type="GO" id="GO:0005524">
    <property type="term" value="F:ATP binding"/>
    <property type="evidence" value="ECO:0007669"/>
    <property type="project" value="UniProtKB-UniRule"/>
</dbReference>
<dbReference type="GO" id="GO:0008763">
    <property type="term" value="F:UDP-N-acetylmuramate-L-alanine ligase activity"/>
    <property type="evidence" value="ECO:0007669"/>
    <property type="project" value="UniProtKB-UniRule"/>
</dbReference>
<dbReference type="GO" id="GO:0051301">
    <property type="term" value="P:cell division"/>
    <property type="evidence" value="ECO:0007669"/>
    <property type="project" value="UniProtKB-KW"/>
</dbReference>
<dbReference type="GO" id="GO:0071555">
    <property type="term" value="P:cell wall organization"/>
    <property type="evidence" value="ECO:0007669"/>
    <property type="project" value="UniProtKB-KW"/>
</dbReference>
<dbReference type="GO" id="GO:0009252">
    <property type="term" value="P:peptidoglycan biosynthetic process"/>
    <property type="evidence" value="ECO:0007669"/>
    <property type="project" value="UniProtKB-UniRule"/>
</dbReference>
<dbReference type="GO" id="GO:0008360">
    <property type="term" value="P:regulation of cell shape"/>
    <property type="evidence" value="ECO:0007669"/>
    <property type="project" value="UniProtKB-KW"/>
</dbReference>
<dbReference type="CDD" id="cd01983">
    <property type="entry name" value="SIMIBI"/>
    <property type="match status" value="1"/>
</dbReference>
<dbReference type="FunFam" id="3.40.1190.10:FF:000001">
    <property type="entry name" value="UDP-N-acetylmuramate--L-alanine ligase"/>
    <property type="match status" value="1"/>
</dbReference>
<dbReference type="FunFam" id="3.40.50.720:FF:000046">
    <property type="entry name" value="UDP-N-acetylmuramate--L-alanine ligase"/>
    <property type="match status" value="1"/>
</dbReference>
<dbReference type="FunFam" id="3.90.190.20:FF:000001">
    <property type="entry name" value="UDP-N-acetylmuramate--L-alanine ligase"/>
    <property type="match status" value="1"/>
</dbReference>
<dbReference type="Gene3D" id="3.90.190.20">
    <property type="entry name" value="Mur ligase, C-terminal domain"/>
    <property type="match status" value="1"/>
</dbReference>
<dbReference type="Gene3D" id="3.40.1190.10">
    <property type="entry name" value="Mur-like, catalytic domain"/>
    <property type="match status" value="1"/>
</dbReference>
<dbReference type="Gene3D" id="3.40.50.720">
    <property type="entry name" value="NAD(P)-binding Rossmann-like Domain"/>
    <property type="match status" value="1"/>
</dbReference>
<dbReference type="HAMAP" id="MF_00046">
    <property type="entry name" value="MurC"/>
    <property type="match status" value="1"/>
</dbReference>
<dbReference type="InterPro" id="IPR036565">
    <property type="entry name" value="Mur-like_cat_sf"/>
</dbReference>
<dbReference type="InterPro" id="IPR004101">
    <property type="entry name" value="Mur_ligase_C"/>
</dbReference>
<dbReference type="InterPro" id="IPR036615">
    <property type="entry name" value="Mur_ligase_C_dom_sf"/>
</dbReference>
<dbReference type="InterPro" id="IPR013221">
    <property type="entry name" value="Mur_ligase_cen"/>
</dbReference>
<dbReference type="InterPro" id="IPR000713">
    <property type="entry name" value="Mur_ligase_N"/>
</dbReference>
<dbReference type="InterPro" id="IPR050061">
    <property type="entry name" value="MurCDEF_pg_biosynth"/>
</dbReference>
<dbReference type="InterPro" id="IPR005758">
    <property type="entry name" value="UDP-N-AcMur_Ala_ligase_MurC"/>
</dbReference>
<dbReference type="NCBIfam" id="TIGR01082">
    <property type="entry name" value="murC"/>
    <property type="match status" value="1"/>
</dbReference>
<dbReference type="PANTHER" id="PTHR43445:SF3">
    <property type="entry name" value="UDP-N-ACETYLMURAMATE--L-ALANINE LIGASE"/>
    <property type="match status" value="1"/>
</dbReference>
<dbReference type="PANTHER" id="PTHR43445">
    <property type="entry name" value="UDP-N-ACETYLMURAMATE--L-ALANINE LIGASE-RELATED"/>
    <property type="match status" value="1"/>
</dbReference>
<dbReference type="Pfam" id="PF01225">
    <property type="entry name" value="Mur_ligase"/>
    <property type="match status" value="1"/>
</dbReference>
<dbReference type="Pfam" id="PF02875">
    <property type="entry name" value="Mur_ligase_C"/>
    <property type="match status" value="1"/>
</dbReference>
<dbReference type="Pfam" id="PF08245">
    <property type="entry name" value="Mur_ligase_M"/>
    <property type="match status" value="1"/>
</dbReference>
<dbReference type="SUPFAM" id="SSF51984">
    <property type="entry name" value="MurCD N-terminal domain"/>
    <property type="match status" value="1"/>
</dbReference>
<dbReference type="SUPFAM" id="SSF53623">
    <property type="entry name" value="MurD-like peptide ligases, catalytic domain"/>
    <property type="match status" value="1"/>
</dbReference>
<dbReference type="SUPFAM" id="SSF53244">
    <property type="entry name" value="MurD-like peptide ligases, peptide-binding domain"/>
    <property type="match status" value="1"/>
</dbReference>
<comment type="function">
    <text evidence="1">Cell wall formation.</text>
</comment>
<comment type="catalytic activity">
    <reaction evidence="1">
        <text>UDP-N-acetyl-alpha-D-muramate + L-alanine + ATP = UDP-N-acetyl-alpha-D-muramoyl-L-alanine + ADP + phosphate + H(+)</text>
        <dbReference type="Rhea" id="RHEA:23372"/>
        <dbReference type="ChEBI" id="CHEBI:15378"/>
        <dbReference type="ChEBI" id="CHEBI:30616"/>
        <dbReference type="ChEBI" id="CHEBI:43474"/>
        <dbReference type="ChEBI" id="CHEBI:57972"/>
        <dbReference type="ChEBI" id="CHEBI:70757"/>
        <dbReference type="ChEBI" id="CHEBI:83898"/>
        <dbReference type="ChEBI" id="CHEBI:456216"/>
        <dbReference type="EC" id="6.3.2.8"/>
    </reaction>
</comment>
<comment type="pathway">
    <text evidence="1">Cell wall biogenesis; peptidoglycan biosynthesis.</text>
</comment>
<comment type="subcellular location">
    <subcellularLocation>
        <location evidence="1">Cytoplasm</location>
    </subcellularLocation>
</comment>
<comment type="similarity">
    <text evidence="1">Belongs to the MurCDEF family.</text>
</comment>
<comment type="sequence caution" evidence="2">
    <conflict type="erroneous initiation">
        <sequence resource="EMBL-CDS" id="ABG16754"/>
    </conflict>
</comment>
<evidence type="ECO:0000255" key="1">
    <source>
        <dbReference type="HAMAP-Rule" id="MF_00046"/>
    </source>
</evidence>
<evidence type="ECO:0000305" key="2"/>
<organism>
    <name type="scientific">Yersinia pestis bv. Antiqua (strain Nepal516)</name>
    <dbReference type="NCBI Taxonomy" id="377628"/>
    <lineage>
        <taxon>Bacteria</taxon>
        <taxon>Pseudomonadati</taxon>
        <taxon>Pseudomonadota</taxon>
        <taxon>Gammaproteobacteria</taxon>
        <taxon>Enterobacterales</taxon>
        <taxon>Yersiniaceae</taxon>
        <taxon>Yersinia</taxon>
    </lineage>
</organism>
<keyword id="KW-0067">ATP-binding</keyword>
<keyword id="KW-0131">Cell cycle</keyword>
<keyword id="KW-0132">Cell division</keyword>
<keyword id="KW-0133">Cell shape</keyword>
<keyword id="KW-0961">Cell wall biogenesis/degradation</keyword>
<keyword id="KW-0963">Cytoplasm</keyword>
<keyword id="KW-0436">Ligase</keyword>
<keyword id="KW-0547">Nucleotide-binding</keyword>
<keyword id="KW-0573">Peptidoglycan synthesis</keyword>
<name>MURC_YERPN</name>
<protein>
    <recommendedName>
        <fullName evidence="1">UDP-N-acetylmuramate--L-alanine ligase</fullName>
        <ecNumber evidence="1">6.3.2.8</ecNumber>
    </recommendedName>
    <alternativeName>
        <fullName evidence="1">UDP-N-acetylmuramoyl-L-alanine synthetase</fullName>
    </alternativeName>
</protein>
<gene>
    <name evidence="1" type="primary">murC</name>
    <name type="ordered locus">YPN_0422</name>
    <name type="ORF">YP516_0436</name>
</gene>
<accession>Q1CMM6</accession>
<accession>C4GNX8</accession>
<proteinExistence type="inferred from homology"/>
<sequence length="491" mass="53654">MNTQQLAKLRTIVPEMRRVRHIHFVGIGGAGMGGIAEVLANEGYQISGSDLAPNSVTQHLTALGAQIYFHHRPENVLDASVVVVSTAISADNPEIVAAREARIPVIRRAEMLAELMRYRHGIAVAGTHGKTTTTAMLSSIYAEAGLDPTFVNGGLVKAAGTHARLGSSRYLIAEADESDASFLHLQPMVAIVTNIEADHMDTYQGDFENLKQTFINFLHNLPFYGRAVMCIDDPVVRELLPRVGRHITTYGFSDDADVQIASYRQEGPQGHFTLRRQDKPLIEVTLNAPGRHNALNAAAAVAVATEEGIEDEDILRALVGFQGTGRRFDFLGNFPLAPVNGKEGSAMLVDDYGHHPTEVDATIKAARAGWPDKRIVMLFQPHRYTRTRDLYDDFANVLSQVDVLLMLDVYAAGEPPIPGADSRALCRTIRNRGKLDPILVPDSESAPEMLAQILNGEDLILVQGAGNIGKIARKLAEHKLQPQLKDEEHHG</sequence>